<protein>
    <recommendedName>
        <fullName evidence="1">Sugar fermentation stimulation protein A</fullName>
    </recommendedName>
</protein>
<accession>B7MBC9</accession>
<feature type="chain" id="PRO_1000196972" description="Sugar fermentation stimulation protein A">
    <location>
        <begin position="1"/>
        <end position="234"/>
    </location>
</feature>
<feature type="DNA-binding region" description="H-T-H motif" evidence="1">
    <location>
        <begin position="201"/>
        <end position="220"/>
    </location>
</feature>
<name>SFSA_ECO45</name>
<proteinExistence type="inferred from homology"/>
<dbReference type="EMBL" id="CU928161">
    <property type="protein sequence ID" value="CAR01521.1"/>
    <property type="molecule type" value="Genomic_DNA"/>
</dbReference>
<dbReference type="RefSeq" id="WP_000396047.1">
    <property type="nucleotide sequence ID" value="NC_011742.1"/>
</dbReference>
<dbReference type="SMR" id="B7MBC9"/>
<dbReference type="KEGG" id="ecz:ECS88_0156"/>
<dbReference type="HOGENOM" id="CLU_052299_2_0_6"/>
<dbReference type="Proteomes" id="UP000000747">
    <property type="component" value="Chromosome"/>
</dbReference>
<dbReference type="GO" id="GO:0003677">
    <property type="term" value="F:DNA binding"/>
    <property type="evidence" value="ECO:0007669"/>
    <property type="project" value="UniProtKB-KW"/>
</dbReference>
<dbReference type="CDD" id="cd22359">
    <property type="entry name" value="SfsA-like_bacterial"/>
    <property type="match status" value="1"/>
</dbReference>
<dbReference type="FunFam" id="2.40.50.580:FF:000001">
    <property type="entry name" value="Sugar fermentation stimulation protein A"/>
    <property type="match status" value="1"/>
</dbReference>
<dbReference type="FunFam" id="3.40.1350.60:FF:000001">
    <property type="entry name" value="Sugar fermentation stimulation protein A"/>
    <property type="match status" value="1"/>
</dbReference>
<dbReference type="Gene3D" id="2.40.50.580">
    <property type="match status" value="1"/>
</dbReference>
<dbReference type="Gene3D" id="3.40.1350.60">
    <property type="match status" value="1"/>
</dbReference>
<dbReference type="HAMAP" id="MF_00095">
    <property type="entry name" value="SfsA"/>
    <property type="match status" value="1"/>
</dbReference>
<dbReference type="InterPro" id="IPR005224">
    <property type="entry name" value="SfsA"/>
</dbReference>
<dbReference type="InterPro" id="IPR040452">
    <property type="entry name" value="SfsA_C"/>
</dbReference>
<dbReference type="InterPro" id="IPR041465">
    <property type="entry name" value="SfsA_N"/>
</dbReference>
<dbReference type="NCBIfam" id="TIGR00230">
    <property type="entry name" value="sfsA"/>
    <property type="match status" value="1"/>
</dbReference>
<dbReference type="PANTHER" id="PTHR30545">
    <property type="entry name" value="SUGAR FERMENTATION STIMULATION PROTEIN A"/>
    <property type="match status" value="1"/>
</dbReference>
<dbReference type="PANTHER" id="PTHR30545:SF2">
    <property type="entry name" value="SUGAR FERMENTATION STIMULATION PROTEIN A"/>
    <property type="match status" value="1"/>
</dbReference>
<dbReference type="Pfam" id="PF03749">
    <property type="entry name" value="SfsA"/>
    <property type="match status" value="1"/>
</dbReference>
<dbReference type="Pfam" id="PF17746">
    <property type="entry name" value="SfsA_N"/>
    <property type="match status" value="1"/>
</dbReference>
<comment type="function">
    <text evidence="1">Binds to DNA non-specifically. Could be a regulatory factor involved in maltose metabolism.</text>
</comment>
<comment type="similarity">
    <text evidence="1">Belongs to the SfsA family.</text>
</comment>
<evidence type="ECO:0000255" key="1">
    <source>
        <dbReference type="HAMAP-Rule" id="MF_00095"/>
    </source>
</evidence>
<gene>
    <name evidence="1" type="primary">sfsA</name>
    <name type="ordered locus">ECS88_0156</name>
</gene>
<sequence length="234" mass="26179">MEFSPPLQRATLIQRYKRFLADVITPDGRELTLHCPNTGAMTGCATPGDTVWYSTSDNTKRKYPHTWELTQSQSGAIICVNTLWANRLTKEAILNESISELAGYSSLKSEVKYGAERSRIDFMLQADSRPDCYIEVKSVTLAENEQGYFPDAVTERGQKHLRELMSVAAEGQRAVIFFAVLHSAITRFSPARHIDEKYAQLLSEAQQRGVEILAYKAELSAEGMALKKSLPVTL</sequence>
<reference key="1">
    <citation type="journal article" date="2009" name="PLoS Genet.">
        <title>Organised genome dynamics in the Escherichia coli species results in highly diverse adaptive paths.</title>
        <authorList>
            <person name="Touchon M."/>
            <person name="Hoede C."/>
            <person name="Tenaillon O."/>
            <person name="Barbe V."/>
            <person name="Baeriswyl S."/>
            <person name="Bidet P."/>
            <person name="Bingen E."/>
            <person name="Bonacorsi S."/>
            <person name="Bouchier C."/>
            <person name="Bouvet O."/>
            <person name="Calteau A."/>
            <person name="Chiapello H."/>
            <person name="Clermont O."/>
            <person name="Cruveiller S."/>
            <person name="Danchin A."/>
            <person name="Diard M."/>
            <person name="Dossat C."/>
            <person name="Karoui M.E."/>
            <person name="Frapy E."/>
            <person name="Garry L."/>
            <person name="Ghigo J.M."/>
            <person name="Gilles A.M."/>
            <person name="Johnson J."/>
            <person name="Le Bouguenec C."/>
            <person name="Lescat M."/>
            <person name="Mangenot S."/>
            <person name="Martinez-Jehanne V."/>
            <person name="Matic I."/>
            <person name="Nassif X."/>
            <person name="Oztas S."/>
            <person name="Petit M.A."/>
            <person name="Pichon C."/>
            <person name="Rouy Z."/>
            <person name="Ruf C.S."/>
            <person name="Schneider D."/>
            <person name="Tourret J."/>
            <person name="Vacherie B."/>
            <person name="Vallenet D."/>
            <person name="Medigue C."/>
            <person name="Rocha E.P.C."/>
            <person name="Denamur E."/>
        </authorList>
    </citation>
    <scope>NUCLEOTIDE SEQUENCE [LARGE SCALE GENOMIC DNA]</scope>
    <source>
        <strain>S88 / ExPEC</strain>
    </source>
</reference>
<organism>
    <name type="scientific">Escherichia coli O45:K1 (strain S88 / ExPEC)</name>
    <dbReference type="NCBI Taxonomy" id="585035"/>
    <lineage>
        <taxon>Bacteria</taxon>
        <taxon>Pseudomonadati</taxon>
        <taxon>Pseudomonadota</taxon>
        <taxon>Gammaproteobacteria</taxon>
        <taxon>Enterobacterales</taxon>
        <taxon>Enterobacteriaceae</taxon>
        <taxon>Escherichia</taxon>
    </lineage>
</organism>
<keyword id="KW-0238">DNA-binding</keyword>
<keyword id="KW-1185">Reference proteome</keyword>